<proteinExistence type="inferred from homology"/>
<reference key="1">
    <citation type="submission" date="2007-06" db="EMBL/GenBank/DDBJ databases">
        <title>Complete sequence of Sinorhizobium medicae WSM419 chromosome.</title>
        <authorList>
            <consortium name="US DOE Joint Genome Institute"/>
            <person name="Copeland A."/>
            <person name="Lucas S."/>
            <person name="Lapidus A."/>
            <person name="Barry K."/>
            <person name="Glavina del Rio T."/>
            <person name="Dalin E."/>
            <person name="Tice H."/>
            <person name="Pitluck S."/>
            <person name="Chain P."/>
            <person name="Malfatti S."/>
            <person name="Shin M."/>
            <person name="Vergez L."/>
            <person name="Schmutz J."/>
            <person name="Larimer F."/>
            <person name="Land M."/>
            <person name="Hauser L."/>
            <person name="Kyrpides N."/>
            <person name="Mikhailova N."/>
            <person name="Reeve W.G."/>
            <person name="Richardson P."/>
        </authorList>
    </citation>
    <scope>NUCLEOTIDE SEQUENCE [LARGE SCALE GENOMIC DNA]</scope>
    <source>
        <strain>WSM419</strain>
    </source>
</reference>
<sequence>MRIGLFAVGRLKAGPEKDLAVRYLDRFAKTGPAVGLELARVAEMVESRAANAETRKREEAVQLEKALVDGSLLVLLDERGKALDSEAFANLLATFRDSGKRDLMIAIGGADGLDPALHARADAVLCLGKMTWPHQLVRILIAEQLYRAVTILSGHPYHRA</sequence>
<accession>A6UDW1</accession>
<name>RLMH_SINMW</name>
<dbReference type="EC" id="2.1.1.177" evidence="1"/>
<dbReference type="EMBL" id="CP000738">
    <property type="protein sequence ID" value="ABR61841.1"/>
    <property type="molecule type" value="Genomic_DNA"/>
</dbReference>
<dbReference type="RefSeq" id="WP_012067222.1">
    <property type="nucleotide sequence ID" value="NC_009636.1"/>
</dbReference>
<dbReference type="RefSeq" id="YP_001328676.1">
    <property type="nucleotide sequence ID" value="NC_009636.1"/>
</dbReference>
<dbReference type="SMR" id="A6UDW1"/>
<dbReference type="STRING" id="366394.Smed_3014"/>
<dbReference type="KEGG" id="smd:Smed_3014"/>
<dbReference type="PATRIC" id="fig|366394.8.peg.6239"/>
<dbReference type="eggNOG" id="COG1576">
    <property type="taxonomic scope" value="Bacteria"/>
</dbReference>
<dbReference type="HOGENOM" id="CLU_100552_1_1_5"/>
<dbReference type="OrthoDB" id="9806643at2"/>
<dbReference type="Proteomes" id="UP000001108">
    <property type="component" value="Chromosome"/>
</dbReference>
<dbReference type="GO" id="GO:0005737">
    <property type="term" value="C:cytoplasm"/>
    <property type="evidence" value="ECO:0007669"/>
    <property type="project" value="UniProtKB-SubCell"/>
</dbReference>
<dbReference type="GO" id="GO:0070038">
    <property type="term" value="F:rRNA (pseudouridine-N3-)-methyltransferase activity"/>
    <property type="evidence" value="ECO:0007669"/>
    <property type="project" value="UniProtKB-UniRule"/>
</dbReference>
<dbReference type="CDD" id="cd18081">
    <property type="entry name" value="RlmH-like"/>
    <property type="match status" value="1"/>
</dbReference>
<dbReference type="Gene3D" id="3.40.1280.10">
    <property type="match status" value="1"/>
</dbReference>
<dbReference type="HAMAP" id="MF_00658">
    <property type="entry name" value="23SrRNA_methyltr_H"/>
    <property type="match status" value="1"/>
</dbReference>
<dbReference type="InterPro" id="IPR029028">
    <property type="entry name" value="Alpha/beta_knot_MTases"/>
</dbReference>
<dbReference type="InterPro" id="IPR003742">
    <property type="entry name" value="RlmH-like"/>
</dbReference>
<dbReference type="InterPro" id="IPR029026">
    <property type="entry name" value="tRNA_m1G_MTases_N"/>
</dbReference>
<dbReference type="NCBIfam" id="NF000989">
    <property type="entry name" value="PRK00103.2-3"/>
    <property type="match status" value="1"/>
</dbReference>
<dbReference type="PANTHER" id="PTHR33603">
    <property type="entry name" value="METHYLTRANSFERASE"/>
    <property type="match status" value="1"/>
</dbReference>
<dbReference type="PANTHER" id="PTHR33603:SF1">
    <property type="entry name" value="RIBOSOMAL RNA LARGE SUBUNIT METHYLTRANSFERASE H"/>
    <property type="match status" value="1"/>
</dbReference>
<dbReference type="Pfam" id="PF02590">
    <property type="entry name" value="SPOUT_MTase"/>
    <property type="match status" value="1"/>
</dbReference>
<dbReference type="PIRSF" id="PIRSF004505">
    <property type="entry name" value="MT_bac"/>
    <property type="match status" value="1"/>
</dbReference>
<dbReference type="SUPFAM" id="SSF75217">
    <property type="entry name" value="alpha/beta knot"/>
    <property type="match status" value="1"/>
</dbReference>
<keyword id="KW-0963">Cytoplasm</keyword>
<keyword id="KW-0489">Methyltransferase</keyword>
<keyword id="KW-0698">rRNA processing</keyword>
<keyword id="KW-0949">S-adenosyl-L-methionine</keyword>
<keyword id="KW-0808">Transferase</keyword>
<organism>
    <name type="scientific">Sinorhizobium medicae (strain WSM419)</name>
    <name type="common">Ensifer medicae</name>
    <dbReference type="NCBI Taxonomy" id="366394"/>
    <lineage>
        <taxon>Bacteria</taxon>
        <taxon>Pseudomonadati</taxon>
        <taxon>Pseudomonadota</taxon>
        <taxon>Alphaproteobacteria</taxon>
        <taxon>Hyphomicrobiales</taxon>
        <taxon>Rhizobiaceae</taxon>
        <taxon>Sinorhizobium/Ensifer group</taxon>
        <taxon>Sinorhizobium</taxon>
    </lineage>
</organism>
<feature type="chain" id="PRO_1000061843" description="Ribosomal RNA large subunit methyltransferase H">
    <location>
        <begin position="1"/>
        <end position="160"/>
    </location>
</feature>
<feature type="binding site" evidence="1">
    <location>
        <position position="76"/>
    </location>
    <ligand>
        <name>S-adenosyl-L-methionine</name>
        <dbReference type="ChEBI" id="CHEBI:59789"/>
    </ligand>
</feature>
<feature type="binding site" evidence="1">
    <location>
        <position position="108"/>
    </location>
    <ligand>
        <name>S-adenosyl-L-methionine</name>
        <dbReference type="ChEBI" id="CHEBI:59789"/>
    </ligand>
</feature>
<feature type="binding site" evidence="1">
    <location>
        <begin position="127"/>
        <end position="132"/>
    </location>
    <ligand>
        <name>S-adenosyl-L-methionine</name>
        <dbReference type="ChEBI" id="CHEBI:59789"/>
    </ligand>
</feature>
<evidence type="ECO:0000255" key="1">
    <source>
        <dbReference type="HAMAP-Rule" id="MF_00658"/>
    </source>
</evidence>
<comment type="function">
    <text evidence="1">Specifically methylates the pseudouridine at position 1915 (m3Psi1915) in 23S rRNA.</text>
</comment>
<comment type="catalytic activity">
    <reaction evidence="1">
        <text>pseudouridine(1915) in 23S rRNA + S-adenosyl-L-methionine = N(3)-methylpseudouridine(1915) in 23S rRNA + S-adenosyl-L-homocysteine + H(+)</text>
        <dbReference type="Rhea" id="RHEA:42752"/>
        <dbReference type="Rhea" id="RHEA-COMP:10221"/>
        <dbReference type="Rhea" id="RHEA-COMP:10222"/>
        <dbReference type="ChEBI" id="CHEBI:15378"/>
        <dbReference type="ChEBI" id="CHEBI:57856"/>
        <dbReference type="ChEBI" id="CHEBI:59789"/>
        <dbReference type="ChEBI" id="CHEBI:65314"/>
        <dbReference type="ChEBI" id="CHEBI:74486"/>
        <dbReference type="EC" id="2.1.1.177"/>
    </reaction>
</comment>
<comment type="subunit">
    <text evidence="1">Homodimer.</text>
</comment>
<comment type="subcellular location">
    <subcellularLocation>
        <location evidence="1">Cytoplasm</location>
    </subcellularLocation>
</comment>
<comment type="similarity">
    <text evidence="1">Belongs to the RNA methyltransferase RlmH family.</text>
</comment>
<gene>
    <name evidence="1" type="primary">rlmH</name>
    <name type="ordered locus">Smed_3014</name>
</gene>
<protein>
    <recommendedName>
        <fullName evidence="1">Ribosomal RNA large subunit methyltransferase H</fullName>
        <ecNumber evidence="1">2.1.1.177</ecNumber>
    </recommendedName>
    <alternativeName>
        <fullName evidence="1">23S rRNA (pseudouridine1915-N3)-methyltransferase</fullName>
    </alternativeName>
    <alternativeName>
        <fullName evidence="1">23S rRNA m3Psi1915 methyltransferase</fullName>
    </alternativeName>
    <alternativeName>
        <fullName evidence="1">rRNA (pseudouridine-N3-)-methyltransferase RlmH</fullName>
    </alternativeName>
</protein>